<gene>
    <name evidence="1" type="primary">rpsD</name>
    <name type="ordered locus">SbBS512_E3682</name>
</gene>
<organism>
    <name type="scientific">Shigella boydii serotype 18 (strain CDC 3083-94 / BS512)</name>
    <dbReference type="NCBI Taxonomy" id="344609"/>
    <lineage>
        <taxon>Bacteria</taxon>
        <taxon>Pseudomonadati</taxon>
        <taxon>Pseudomonadota</taxon>
        <taxon>Gammaproteobacteria</taxon>
        <taxon>Enterobacterales</taxon>
        <taxon>Enterobacteriaceae</taxon>
        <taxon>Shigella</taxon>
    </lineage>
</organism>
<evidence type="ECO:0000255" key="1">
    <source>
        <dbReference type="HAMAP-Rule" id="MF_01306"/>
    </source>
</evidence>
<evidence type="ECO:0000305" key="2"/>
<comment type="function">
    <text evidence="1">One of the primary rRNA binding proteins, it binds directly to 16S rRNA where it nucleates assembly of the body of the 30S subunit.</text>
</comment>
<comment type="function">
    <text evidence="1">With S5 and S12 plays an important role in translational accuracy.</text>
</comment>
<comment type="subunit">
    <text evidence="1">Part of the 30S ribosomal subunit. Contacts protein S5. The interaction surface between S4 and S5 is involved in control of translational fidelity.</text>
</comment>
<comment type="similarity">
    <text evidence="1">Belongs to the universal ribosomal protein uS4 family.</text>
</comment>
<keyword id="KW-1185">Reference proteome</keyword>
<keyword id="KW-0687">Ribonucleoprotein</keyword>
<keyword id="KW-0689">Ribosomal protein</keyword>
<keyword id="KW-0694">RNA-binding</keyword>
<keyword id="KW-0699">rRNA-binding</keyword>
<reference key="1">
    <citation type="submission" date="2008-05" db="EMBL/GenBank/DDBJ databases">
        <title>Complete sequence of Shigella boydii serotype 18 strain BS512.</title>
        <authorList>
            <person name="Rasko D.A."/>
            <person name="Rosovitz M."/>
            <person name="Maurelli A.T."/>
            <person name="Myers G."/>
            <person name="Seshadri R."/>
            <person name="Cer R."/>
            <person name="Jiang L."/>
            <person name="Ravel J."/>
            <person name="Sebastian Y."/>
        </authorList>
    </citation>
    <scope>NUCLEOTIDE SEQUENCE [LARGE SCALE GENOMIC DNA]</scope>
    <source>
        <strain>CDC 3083-94 / BS512</strain>
    </source>
</reference>
<proteinExistence type="inferred from homology"/>
<sequence>MARYLGPKLKLSRREGTDLFLKSGVRAIDTKCKIEQAPGQHGARKPRLSDYGVQLREKQKVRRIYGVLERQFRNYYKEAARLKGNTGENLLALLEGRLDNVVYRMGFGATRAEARQLVSHKAIMVNGRVVNIASYQVSPNDVVSIREKAKKQSRVKAALELAEQREKPTWLEVDAGKMEGTFKRKPERSDLSADINEHLIVELYSK</sequence>
<protein>
    <recommendedName>
        <fullName evidence="1">Small ribosomal subunit protein uS4</fullName>
    </recommendedName>
    <alternativeName>
        <fullName evidence="2">30S ribosomal protein S4</fullName>
    </alternativeName>
</protein>
<feature type="chain" id="PRO_1000140794" description="Small ribosomal subunit protein uS4">
    <location>
        <begin position="1"/>
        <end position="206"/>
    </location>
</feature>
<feature type="domain" description="S4 RNA-binding" evidence="1">
    <location>
        <begin position="96"/>
        <end position="156"/>
    </location>
</feature>
<name>RS4_SHIB3</name>
<accession>B2U2R5</accession>
<dbReference type="EMBL" id="CP001063">
    <property type="protein sequence ID" value="ACD08914.1"/>
    <property type="molecule type" value="Genomic_DNA"/>
</dbReference>
<dbReference type="RefSeq" id="WP_000135224.1">
    <property type="nucleotide sequence ID" value="NC_010658.1"/>
</dbReference>
<dbReference type="SMR" id="B2U2R5"/>
<dbReference type="STRING" id="344609.SbBS512_E3682"/>
<dbReference type="GeneID" id="93778691"/>
<dbReference type="KEGG" id="sbc:SbBS512_E3682"/>
<dbReference type="HOGENOM" id="CLU_092403_0_2_6"/>
<dbReference type="Proteomes" id="UP000001030">
    <property type="component" value="Chromosome"/>
</dbReference>
<dbReference type="GO" id="GO:0015935">
    <property type="term" value="C:small ribosomal subunit"/>
    <property type="evidence" value="ECO:0007669"/>
    <property type="project" value="InterPro"/>
</dbReference>
<dbReference type="GO" id="GO:0019843">
    <property type="term" value="F:rRNA binding"/>
    <property type="evidence" value="ECO:0007669"/>
    <property type="project" value="UniProtKB-UniRule"/>
</dbReference>
<dbReference type="GO" id="GO:0003735">
    <property type="term" value="F:structural constituent of ribosome"/>
    <property type="evidence" value="ECO:0007669"/>
    <property type="project" value="InterPro"/>
</dbReference>
<dbReference type="GO" id="GO:0042274">
    <property type="term" value="P:ribosomal small subunit biogenesis"/>
    <property type="evidence" value="ECO:0007669"/>
    <property type="project" value="TreeGrafter"/>
</dbReference>
<dbReference type="GO" id="GO:0006412">
    <property type="term" value="P:translation"/>
    <property type="evidence" value="ECO:0007669"/>
    <property type="project" value="UniProtKB-UniRule"/>
</dbReference>
<dbReference type="CDD" id="cd00165">
    <property type="entry name" value="S4"/>
    <property type="match status" value="1"/>
</dbReference>
<dbReference type="FunFam" id="1.10.1050.10:FF:000001">
    <property type="entry name" value="30S ribosomal protein S4"/>
    <property type="match status" value="1"/>
</dbReference>
<dbReference type="FunFam" id="3.10.290.10:FF:000001">
    <property type="entry name" value="30S ribosomal protein S4"/>
    <property type="match status" value="1"/>
</dbReference>
<dbReference type="Gene3D" id="1.10.1050.10">
    <property type="entry name" value="Ribosomal Protein S4 Delta 41, Chain A, domain 1"/>
    <property type="match status" value="1"/>
</dbReference>
<dbReference type="Gene3D" id="3.10.290.10">
    <property type="entry name" value="RNA-binding S4 domain"/>
    <property type="match status" value="1"/>
</dbReference>
<dbReference type="HAMAP" id="MF_01306_B">
    <property type="entry name" value="Ribosomal_uS4_B"/>
    <property type="match status" value="1"/>
</dbReference>
<dbReference type="InterPro" id="IPR022801">
    <property type="entry name" value="Ribosomal_uS4"/>
</dbReference>
<dbReference type="InterPro" id="IPR005709">
    <property type="entry name" value="Ribosomal_uS4_bac-type"/>
</dbReference>
<dbReference type="InterPro" id="IPR018079">
    <property type="entry name" value="Ribosomal_uS4_CS"/>
</dbReference>
<dbReference type="InterPro" id="IPR001912">
    <property type="entry name" value="Ribosomal_uS4_N"/>
</dbReference>
<dbReference type="InterPro" id="IPR002942">
    <property type="entry name" value="S4_RNA-bd"/>
</dbReference>
<dbReference type="InterPro" id="IPR036986">
    <property type="entry name" value="S4_RNA-bd_sf"/>
</dbReference>
<dbReference type="NCBIfam" id="NF003717">
    <property type="entry name" value="PRK05327.1"/>
    <property type="match status" value="1"/>
</dbReference>
<dbReference type="NCBIfam" id="TIGR01017">
    <property type="entry name" value="rpsD_bact"/>
    <property type="match status" value="1"/>
</dbReference>
<dbReference type="PANTHER" id="PTHR11831">
    <property type="entry name" value="30S 40S RIBOSOMAL PROTEIN"/>
    <property type="match status" value="1"/>
</dbReference>
<dbReference type="PANTHER" id="PTHR11831:SF4">
    <property type="entry name" value="SMALL RIBOSOMAL SUBUNIT PROTEIN US4M"/>
    <property type="match status" value="1"/>
</dbReference>
<dbReference type="Pfam" id="PF00163">
    <property type="entry name" value="Ribosomal_S4"/>
    <property type="match status" value="1"/>
</dbReference>
<dbReference type="Pfam" id="PF01479">
    <property type="entry name" value="S4"/>
    <property type="match status" value="1"/>
</dbReference>
<dbReference type="SMART" id="SM01390">
    <property type="entry name" value="Ribosomal_S4"/>
    <property type="match status" value="1"/>
</dbReference>
<dbReference type="SMART" id="SM00363">
    <property type="entry name" value="S4"/>
    <property type="match status" value="1"/>
</dbReference>
<dbReference type="SUPFAM" id="SSF55174">
    <property type="entry name" value="Alpha-L RNA-binding motif"/>
    <property type="match status" value="1"/>
</dbReference>
<dbReference type="PROSITE" id="PS00632">
    <property type="entry name" value="RIBOSOMAL_S4"/>
    <property type="match status" value="1"/>
</dbReference>
<dbReference type="PROSITE" id="PS50889">
    <property type="entry name" value="S4"/>
    <property type="match status" value="1"/>
</dbReference>